<protein>
    <recommendedName>
        <fullName evidence="1">Glutamate-1-semialdehyde 2,1-aminomutase</fullName>
        <shortName evidence="1">GSA</shortName>
        <ecNumber evidence="1">5.4.3.8</ecNumber>
    </recommendedName>
    <alternativeName>
        <fullName evidence="1">Glutamate-1-semialdehyde aminotransferase</fullName>
        <shortName evidence="1">GSA-AT</shortName>
    </alternativeName>
</protein>
<proteinExistence type="inferred from homology"/>
<accession>B0R7L9</accession>
<comment type="catalytic activity">
    <reaction evidence="1">
        <text>(S)-4-amino-5-oxopentanoate = 5-aminolevulinate</text>
        <dbReference type="Rhea" id="RHEA:14265"/>
        <dbReference type="ChEBI" id="CHEBI:57501"/>
        <dbReference type="ChEBI" id="CHEBI:356416"/>
        <dbReference type="EC" id="5.4.3.8"/>
    </reaction>
</comment>
<comment type="cofactor">
    <cofactor evidence="1">
        <name>pyridoxal 5'-phosphate</name>
        <dbReference type="ChEBI" id="CHEBI:597326"/>
    </cofactor>
</comment>
<comment type="pathway">
    <text evidence="1">Porphyrin-containing compound metabolism; protoporphyrin-IX biosynthesis; 5-aminolevulinate from L-glutamyl-tRNA(Glu): step 2/2.</text>
</comment>
<comment type="subcellular location">
    <subcellularLocation>
        <location evidence="1">Cytoplasm</location>
    </subcellularLocation>
</comment>
<comment type="similarity">
    <text evidence="1">Belongs to the class-III pyridoxal-phosphate-dependent aminotransferase family. HemL subfamily.</text>
</comment>
<sequence length="445" mass="47619">MNRETSRELYDRSLDVLVGGVNSTVRAAPQPYPTFVQSGDGGHVIDADGNRYIDWVMGLGPLLLGHDLPQPVTAAIQRRASDGPLFGTPTEIEVEHAEFVARHVPSVELLRFVNSGTEATVSAVRLARGYTGRNKIVVMQGGYHGAQESTLVEGDADHRGPSSAGIPPAFAQHTIPVPFNDADAVTEVFETHGDDIAAVLVEPILANKGIVEPVAGYHETLRDLTHDHGALLIWDEVITGFRVGGLGCAQSEFDITPDVTTFGKIIGGGFPVGAIGGRTDVMEEFTPTGDVFQAGTFSGHPVTMAAGLETLQYAAENDVYEHVNRLGGRLREGLAAVVAEHAPAYTVVGRDSMFKVVFTRDGDAQSGACTDGCRQDPDCERHAACPKTGADVGDAAVQRWNRVFRPQLLDAGVLLSQNQFESQFVSYGHTEADVDETIEAYRSAL</sequence>
<feature type="chain" id="PRO_1000201040" description="Glutamate-1-semialdehyde 2,1-aminomutase">
    <location>
        <begin position="1"/>
        <end position="445"/>
    </location>
</feature>
<feature type="modified residue" description="N6-(pyridoxal phosphate)lysine" evidence="1">
    <location>
        <position position="264"/>
    </location>
</feature>
<name>GSA_HALS3</name>
<organism>
    <name type="scientific">Halobacterium salinarum (strain ATCC 29341 / DSM 671 / R1)</name>
    <dbReference type="NCBI Taxonomy" id="478009"/>
    <lineage>
        <taxon>Archaea</taxon>
        <taxon>Methanobacteriati</taxon>
        <taxon>Methanobacteriota</taxon>
        <taxon>Stenosarchaea group</taxon>
        <taxon>Halobacteria</taxon>
        <taxon>Halobacteriales</taxon>
        <taxon>Halobacteriaceae</taxon>
        <taxon>Halobacterium</taxon>
        <taxon>Halobacterium salinarum NRC-34001</taxon>
    </lineage>
</organism>
<dbReference type="EC" id="5.4.3.8" evidence="1"/>
<dbReference type="EMBL" id="AM774415">
    <property type="protein sequence ID" value="CAP14738.1"/>
    <property type="molecule type" value="Genomic_DNA"/>
</dbReference>
<dbReference type="RefSeq" id="WP_010903735.1">
    <property type="nucleotide sequence ID" value="NC_010364.1"/>
</dbReference>
<dbReference type="SMR" id="B0R7L9"/>
<dbReference type="EnsemblBacteria" id="CAP14738">
    <property type="protein sequence ID" value="CAP14738"/>
    <property type="gene ID" value="OE_4268F"/>
</dbReference>
<dbReference type="KEGG" id="hsl:OE_4268F"/>
<dbReference type="HOGENOM" id="CLU_016922_1_5_2"/>
<dbReference type="PhylomeDB" id="B0R7L9"/>
<dbReference type="UniPathway" id="UPA00251">
    <property type="reaction ID" value="UER00317"/>
</dbReference>
<dbReference type="Proteomes" id="UP000001321">
    <property type="component" value="Chromosome"/>
</dbReference>
<dbReference type="GO" id="GO:0005737">
    <property type="term" value="C:cytoplasm"/>
    <property type="evidence" value="ECO:0007669"/>
    <property type="project" value="UniProtKB-SubCell"/>
</dbReference>
<dbReference type="GO" id="GO:0042286">
    <property type="term" value="F:glutamate-1-semialdehyde 2,1-aminomutase activity"/>
    <property type="evidence" value="ECO:0007669"/>
    <property type="project" value="UniProtKB-UniRule"/>
</dbReference>
<dbReference type="GO" id="GO:0030170">
    <property type="term" value="F:pyridoxal phosphate binding"/>
    <property type="evidence" value="ECO:0007669"/>
    <property type="project" value="InterPro"/>
</dbReference>
<dbReference type="GO" id="GO:0008483">
    <property type="term" value="F:transaminase activity"/>
    <property type="evidence" value="ECO:0007669"/>
    <property type="project" value="InterPro"/>
</dbReference>
<dbReference type="GO" id="GO:0006782">
    <property type="term" value="P:protoporphyrinogen IX biosynthetic process"/>
    <property type="evidence" value="ECO:0007669"/>
    <property type="project" value="UniProtKB-UniRule"/>
</dbReference>
<dbReference type="CDD" id="cd00610">
    <property type="entry name" value="OAT_like"/>
    <property type="match status" value="1"/>
</dbReference>
<dbReference type="FunFam" id="3.40.640.10:FF:000021">
    <property type="entry name" value="Glutamate-1-semialdehyde 2,1-aminomutase"/>
    <property type="match status" value="1"/>
</dbReference>
<dbReference type="Gene3D" id="3.90.1150.10">
    <property type="entry name" value="Aspartate Aminotransferase, domain 1"/>
    <property type="match status" value="1"/>
</dbReference>
<dbReference type="Gene3D" id="3.40.640.10">
    <property type="entry name" value="Type I PLP-dependent aspartate aminotransferase-like (Major domain)"/>
    <property type="match status" value="1"/>
</dbReference>
<dbReference type="HAMAP" id="MF_00375">
    <property type="entry name" value="HemL_aminotrans_3"/>
    <property type="match status" value="1"/>
</dbReference>
<dbReference type="InterPro" id="IPR004639">
    <property type="entry name" value="4pyrrol_synth_GluAld_NH2Trfase"/>
</dbReference>
<dbReference type="InterPro" id="IPR005814">
    <property type="entry name" value="Aminotrans_3"/>
</dbReference>
<dbReference type="InterPro" id="IPR049704">
    <property type="entry name" value="Aminotrans_3_PPA_site"/>
</dbReference>
<dbReference type="InterPro" id="IPR015424">
    <property type="entry name" value="PyrdxlP-dep_Trfase"/>
</dbReference>
<dbReference type="InterPro" id="IPR015421">
    <property type="entry name" value="PyrdxlP-dep_Trfase_major"/>
</dbReference>
<dbReference type="InterPro" id="IPR015422">
    <property type="entry name" value="PyrdxlP-dep_Trfase_small"/>
</dbReference>
<dbReference type="NCBIfam" id="NF000818">
    <property type="entry name" value="PRK00062.1"/>
    <property type="match status" value="1"/>
</dbReference>
<dbReference type="PANTHER" id="PTHR43713">
    <property type="entry name" value="GLUTAMATE-1-SEMIALDEHYDE 2,1-AMINOMUTASE"/>
    <property type="match status" value="1"/>
</dbReference>
<dbReference type="PANTHER" id="PTHR43713:SF3">
    <property type="entry name" value="GLUTAMATE-1-SEMIALDEHYDE 2,1-AMINOMUTASE 1, CHLOROPLASTIC-RELATED"/>
    <property type="match status" value="1"/>
</dbReference>
<dbReference type="Pfam" id="PF00202">
    <property type="entry name" value="Aminotran_3"/>
    <property type="match status" value="1"/>
</dbReference>
<dbReference type="SUPFAM" id="SSF53383">
    <property type="entry name" value="PLP-dependent transferases"/>
    <property type="match status" value="1"/>
</dbReference>
<dbReference type="PROSITE" id="PS00600">
    <property type="entry name" value="AA_TRANSFER_CLASS_3"/>
    <property type="match status" value="1"/>
</dbReference>
<gene>
    <name evidence="1" type="primary">hemL</name>
    <name type="ordered locus">OE_4268F</name>
</gene>
<reference key="1">
    <citation type="journal article" date="2008" name="Genomics">
        <title>Evolution in the laboratory: the genome of Halobacterium salinarum strain R1 compared to that of strain NRC-1.</title>
        <authorList>
            <person name="Pfeiffer F."/>
            <person name="Schuster S.C."/>
            <person name="Broicher A."/>
            <person name="Falb M."/>
            <person name="Palm P."/>
            <person name="Rodewald K."/>
            <person name="Ruepp A."/>
            <person name="Soppa J."/>
            <person name="Tittor J."/>
            <person name="Oesterhelt D."/>
        </authorList>
    </citation>
    <scope>NUCLEOTIDE SEQUENCE [LARGE SCALE GENOMIC DNA]</scope>
    <source>
        <strain>ATCC 29341 / DSM 671 / R1</strain>
    </source>
</reference>
<evidence type="ECO:0000255" key="1">
    <source>
        <dbReference type="HAMAP-Rule" id="MF_00375"/>
    </source>
</evidence>
<keyword id="KW-0963">Cytoplasm</keyword>
<keyword id="KW-0413">Isomerase</keyword>
<keyword id="KW-0627">Porphyrin biosynthesis</keyword>
<keyword id="KW-0663">Pyridoxal phosphate</keyword>